<evidence type="ECO:0000250" key="1">
    <source>
        <dbReference type="UniProtKB" id="P03901"/>
    </source>
</evidence>
<evidence type="ECO:0000250" key="2">
    <source>
        <dbReference type="UniProtKB" id="P03902"/>
    </source>
</evidence>
<evidence type="ECO:0000255" key="3"/>
<evidence type="ECO:0000305" key="4"/>
<organism>
    <name type="scientific">Microcebus mittermeieri</name>
    <name type="common">Mittermeier's mouse lemur</name>
    <dbReference type="NCBI Taxonomy" id="236274"/>
    <lineage>
        <taxon>Eukaryota</taxon>
        <taxon>Metazoa</taxon>
        <taxon>Chordata</taxon>
        <taxon>Craniata</taxon>
        <taxon>Vertebrata</taxon>
        <taxon>Euteleostomi</taxon>
        <taxon>Mammalia</taxon>
        <taxon>Eutheria</taxon>
        <taxon>Euarchontoglires</taxon>
        <taxon>Primates</taxon>
        <taxon>Strepsirrhini</taxon>
        <taxon>Lemuriformes</taxon>
        <taxon>Cheirogaleidae</taxon>
        <taxon>Microcebus</taxon>
    </lineage>
</organism>
<keyword id="KW-0249">Electron transport</keyword>
<keyword id="KW-0472">Membrane</keyword>
<keyword id="KW-0496">Mitochondrion</keyword>
<keyword id="KW-0999">Mitochondrion inner membrane</keyword>
<keyword id="KW-0520">NAD</keyword>
<keyword id="KW-0679">Respiratory chain</keyword>
<keyword id="KW-1278">Translocase</keyword>
<keyword id="KW-0812">Transmembrane</keyword>
<keyword id="KW-1133">Transmembrane helix</keyword>
<keyword id="KW-0813">Transport</keyword>
<keyword id="KW-0830">Ubiquinone</keyword>
<accession>Q591Y0</accession>
<name>NU4LM_MICMI</name>
<proteinExistence type="inferred from homology"/>
<dbReference type="EC" id="7.1.1.2"/>
<dbReference type="EMBL" id="AY582637">
    <property type="protein sequence ID" value="AAS92739.1"/>
    <property type="molecule type" value="Genomic_DNA"/>
</dbReference>
<dbReference type="EMBL" id="AY582638">
    <property type="protein sequence ID" value="AAS92743.1"/>
    <property type="molecule type" value="Genomic_DNA"/>
</dbReference>
<dbReference type="EMBL" id="AY582639">
    <property type="protein sequence ID" value="AAS92747.1"/>
    <property type="molecule type" value="Genomic_DNA"/>
</dbReference>
<dbReference type="EMBL" id="AY582640">
    <property type="protein sequence ID" value="AAS92751.1"/>
    <property type="molecule type" value="Genomic_DNA"/>
</dbReference>
<dbReference type="EMBL" id="AY582641">
    <property type="protein sequence ID" value="AAS92755.1"/>
    <property type="molecule type" value="Genomic_DNA"/>
</dbReference>
<dbReference type="EMBL" id="AY582642">
    <property type="protein sequence ID" value="AAS92759.1"/>
    <property type="molecule type" value="Genomic_DNA"/>
</dbReference>
<dbReference type="SMR" id="Q591Y0"/>
<dbReference type="GO" id="GO:0005743">
    <property type="term" value="C:mitochondrial inner membrane"/>
    <property type="evidence" value="ECO:0000250"/>
    <property type="project" value="UniProtKB"/>
</dbReference>
<dbReference type="GO" id="GO:0045271">
    <property type="term" value="C:respiratory chain complex I"/>
    <property type="evidence" value="ECO:0000250"/>
    <property type="project" value="UniProtKB"/>
</dbReference>
<dbReference type="GO" id="GO:0008137">
    <property type="term" value="F:NADH dehydrogenase (ubiquinone) activity"/>
    <property type="evidence" value="ECO:0000250"/>
    <property type="project" value="UniProtKB"/>
</dbReference>
<dbReference type="GO" id="GO:0042773">
    <property type="term" value="P:ATP synthesis coupled electron transport"/>
    <property type="evidence" value="ECO:0007669"/>
    <property type="project" value="InterPro"/>
</dbReference>
<dbReference type="FunFam" id="1.10.287.3510:FF:000002">
    <property type="entry name" value="NADH-ubiquinone oxidoreductase chain 4L"/>
    <property type="match status" value="1"/>
</dbReference>
<dbReference type="Gene3D" id="1.10.287.3510">
    <property type="match status" value="1"/>
</dbReference>
<dbReference type="InterPro" id="IPR001133">
    <property type="entry name" value="NADH_UbQ_OxRdtase_chain4L/K"/>
</dbReference>
<dbReference type="InterPro" id="IPR039428">
    <property type="entry name" value="NUOK/Mnh_C1-like"/>
</dbReference>
<dbReference type="PANTHER" id="PTHR11434:SF0">
    <property type="entry name" value="NADH-UBIQUINONE OXIDOREDUCTASE CHAIN 4L"/>
    <property type="match status" value="1"/>
</dbReference>
<dbReference type="PANTHER" id="PTHR11434">
    <property type="entry name" value="NADH-UBIQUINONE OXIDOREDUCTASE SUBUNIT ND4L"/>
    <property type="match status" value="1"/>
</dbReference>
<dbReference type="Pfam" id="PF00420">
    <property type="entry name" value="Oxidored_q2"/>
    <property type="match status" value="1"/>
</dbReference>
<feature type="chain" id="PRO_0000256688" description="NADH-ubiquinone oxidoreductase chain 4L">
    <location>
        <begin position="1"/>
        <end position="98"/>
    </location>
</feature>
<feature type="transmembrane region" description="Helical" evidence="3">
    <location>
        <begin position="2"/>
        <end position="22"/>
    </location>
</feature>
<feature type="transmembrane region" description="Helical" evidence="3">
    <location>
        <begin position="29"/>
        <end position="49"/>
    </location>
</feature>
<feature type="transmembrane region" description="Helical" evidence="3">
    <location>
        <begin position="61"/>
        <end position="81"/>
    </location>
</feature>
<reference key="1">
    <citation type="submission" date="2004-03" db="EMBL/GenBank/DDBJ databases">
        <title>Revision of the mouse lemurs (Primates, Microcebus) in Eastern Madagascar with the description of three new species.</title>
        <authorList>
            <person name="Louis E.E. Jr."/>
            <person name="Coles M.S."/>
            <person name="Andrianompohavana R."/>
            <person name="Sommer J.A."/>
            <person name="Mayor M.I."/>
            <person name="Brenneman R.A."/>
        </authorList>
    </citation>
    <scope>NUCLEOTIDE SEQUENCE [GENOMIC DNA]</scope>
    <source>
        <strain>Isolate JAR1</strain>
        <strain>Isolate JAR12</strain>
        <strain>Isolate JAR16</strain>
        <strain>Isolate JAR17</strain>
        <strain>Isolate JAR18</strain>
        <strain>Isolate PBZT115</strain>
    </source>
</reference>
<geneLocation type="mitochondrion"/>
<gene>
    <name type="primary">MT-ND4L</name>
    <name type="synonym">MTND4L</name>
    <name type="synonym">NADH4L</name>
    <name type="synonym">ND4L</name>
</gene>
<protein>
    <recommendedName>
        <fullName>NADH-ubiquinone oxidoreductase chain 4L</fullName>
        <ecNumber>7.1.1.2</ecNumber>
    </recommendedName>
    <alternativeName>
        <fullName>NADH dehydrogenase subunit 4L</fullName>
    </alternativeName>
</protein>
<sequence length="98" mass="10778">MPSISININLAFAAALLGMLMFRSHMMSSLLCLEGMMLSMFTLSTLTILNMQFTMSFTMPILLLVFAACEAAIGLALLVMVSNNYGLDYIQNLNLLQC</sequence>
<comment type="function">
    <text evidence="1">Core subunit of the mitochondrial membrane respiratory chain NADH dehydrogenase (Complex I) which catalyzes electron transfer from NADH through the respiratory chain, using ubiquinone as an electron acceptor. Part of the enzyme membrane arm which is embedded in the lipid bilayer and involved in proton translocation.</text>
</comment>
<comment type="catalytic activity">
    <reaction evidence="1">
        <text>a ubiquinone + NADH + 5 H(+)(in) = a ubiquinol + NAD(+) + 4 H(+)(out)</text>
        <dbReference type="Rhea" id="RHEA:29091"/>
        <dbReference type="Rhea" id="RHEA-COMP:9565"/>
        <dbReference type="Rhea" id="RHEA-COMP:9566"/>
        <dbReference type="ChEBI" id="CHEBI:15378"/>
        <dbReference type="ChEBI" id="CHEBI:16389"/>
        <dbReference type="ChEBI" id="CHEBI:17976"/>
        <dbReference type="ChEBI" id="CHEBI:57540"/>
        <dbReference type="ChEBI" id="CHEBI:57945"/>
        <dbReference type="EC" id="7.1.1.2"/>
    </reaction>
    <physiologicalReaction direction="left-to-right" evidence="1">
        <dbReference type="Rhea" id="RHEA:29092"/>
    </physiologicalReaction>
</comment>
<comment type="subunit">
    <text evidence="2">Core subunit of respiratory chain NADH dehydrogenase (Complex I) which is composed of 45 different subunits.</text>
</comment>
<comment type="subcellular location">
    <subcellularLocation>
        <location evidence="2">Mitochondrion inner membrane</location>
        <topology evidence="3">Multi-pass membrane protein</topology>
    </subcellularLocation>
</comment>
<comment type="similarity">
    <text evidence="4">Belongs to the complex I subunit 4L family.</text>
</comment>